<proteinExistence type="inferred from homology"/>
<evidence type="ECO:0000250" key="1"/>
<evidence type="ECO:0000255" key="2">
    <source>
        <dbReference type="PROSITE-ProRule" id="PRU10013"/>
    </source>
</evidence>
<evidence type="ECO:0000256" key="3">
    <source>
        <dbReference type="SAM" id="MobiDB-lite"/>
    </source>
</evidence>
<evidence type="ECO:0000305" key="4"/>
<reference key="1">
    <citation type="journal article" date="1996" name="Microbiology">
        <title>Sequencing of a 65 kb region of the Bacillus subtilis genome containing the lic and cel loci, and creation of a 177 kb contig covering the gnt-sacXY region.</title>
        <authorList>
            <person name="Yoshida K."/>
            <person name="Shindo K."/>
            <person name="Sano H."/>
            <person name="Seki S."/>
            <person name="Fujimura M."/>
            <person name="Yanai N."/>
            <person name="Miwa Y."/>
            <person name="Fujita Y."/>
        </authorList>
    </citation>
    <scope>NUCLEOTIDE SEQUENCE [GENOMIC DNA]</scope>
    <source>
        <strain>168 / BGSC1A1</strain>
    </source>
</reference>
<reference key="2">
    <citation type="journal article" date="1997" name="Nature">
        <title>The complete genome sequence of the Gram-positive bacterium Bacillus subtilis.</title>
        <authorList>
            <person name="Kunst F."/>
            <person name="Ogasawara N."/>
            <person name="Moszer I."/>
            <person name="Albertini A.M."/>
            <person name="Alloni G."/>
            <person name="Azevedo V."/>
            <person name="Bertero M.G."/>
            <person name="Bessieres P."/>
            <person name="Bolotin A."/>
            <person name="Borchert S."/>
            <person name="Borriss R."/>
            <person name="Boursier L."/>
            <person name="Brans A."/>
            <person name="Braun M."/>
            <person name="Brignell S.C."/>
            <person name="Bron S."/>
            <person name="Brouillet S."/>
            <person name="Bruschi C.V."/>
            <person name="Caldwell B."/>
            <person name="Capuano V."/>
            <person name="Carter N.M."/>
            <person name="Choi S.-K."/>
            <person name="Codani J.-J."/>
            <person name="Connerton I.F."/>
            <person name="Cummings N.J."/>
            <person name="Daniel R.A."/>
            <person name="Denizot F."/>
            <person name="Devine K.M."/>
            <person name="Duesterhoeft A."/>
            <person name="Ehrlich S.D."/>
            <person name="Emmerson P.T."/>
            <person name="Entian K.-D."/>
            <person name="Errington J."/>
            <person name="Fabret C."/>
            <person name="Ferrari E."/>
            <person name="Foulger D."/>
            <person name="Fritz C."/>
            <person name="Fujita M."/>
            <person name="Fujita Y."/>
            <person name="Fuma S."/>
            <person name="Galizzi A."/>
            <person name="Galleron N."/>
            <person name="Ghim S.-Y."/>
            <person name="Glaser P."/>
            <person name="Goffeau A."/>
            <person name="Golightly E.J."/>
            <person name="Grandi G."/>
            <person name="Guiseppi G."/>
            <person name="Guy B.J."/>
            <person name="Haga K."/>
            <person name="Haiech J."/>
            <person name="Harwood C.R."/>
            <person name="Henaut A."/>
            <person name="Hilbert H."/>
            <person name="Holsappel S."/>
            <person name="Hosono S."/>
            <person name="Hullo M.-F."/>
            <person name="Itaya M."/>
            <person name="Jones L.-M."/>
            <person name="Joris B."/>
            <person name="Karamata D."/>
            <person name="Kasahara Y."/>
            <person name="Klaerr-Blanchard M."/>
            <person name="Klein C."/>
            <person name="Kobayashi Y."/>
            <person name="Koetter P."/>
            <person name="Koningstein G."/>
            <person name="Krogh S."/>
            <person name="Kumano M."/>
            <person name="Kurita K."/>
            <person name="Lapidus A."/>
            <person name="Lardinois S."/>
            <person name="Lauber J."/>
            <person name="Lazarevic V."/>
            <person name="Lee S.-M."/>
            <person name="Levine A."/>
            <person name="Liu H."/>
            <person name="Masuda S."/>
            <person name="Mauel C."/>
            <person name="Medigue C."/>
            <person name="Medina N."/>
            <person name="Mellado R.P."/>
            <person name="Mizuno M."/>
            <person name="Moestl D."/>
            <person name="Nakai S."/>
            <person name="Noback M."/>
            <person name="Noone D."/>
            <person name="O'Reilly M."/>
            <person name="Ogawa K."/>
            <person name="Ogiwara A."/>
            <person name="Oudega B."/>
            <person name="Park S.-H."/>
            <person name="Parro V."/>
            <person name="Pohl T.M."/>
            <person name="Portetelle D."/>
            <person name="Porwollik S."/>
            <person name="Prescott A.M."/>
            <person name="Presecan E."/>
            <person name="Pujic P."/>
            <person name="Purnelle B."/>
            <person name="Rapoport G."/>
            <person name="Rey M."/>
            <person name="Reynolds S."/>
            <person name="Rieger M."/>
            <person name="Rivolta C."/>
            <person name="Rocha E."/>
            <person name="Roche B."/>
            <person name="Rose M."/>
            <person name="Sadaie Y."/>
            <person name="Sato T."/>
            <person name="Scanlan E."/>
            <person name="Schleich S."/>
            <person name="Schroeter R."/>
            <person name="Scoffone F."/>
            <person name="Sekiguchi J."/>
            <person name="Sekowska A."/>
            <person name="Seror S.J."/>
            <person name="Serror P."/>
            <person name="Shin B.-S."/>
            <person name="Soldo B."/>
            <person name="Sorokin A."/>
            <person name="Tacconi E."/>
            <person name="Takagi T."/>
            <person name="Takahashi H."/>
            <person name="Takemaru K."/>
            <person name="Takeuchi M."/>
            <person name="Tamakoshi A."/>
            <person name="Tanaka T."/>
            <person name="Terpstra P."/>
            <person name="Tognoni A."/>
            <person name="Tosato V."/>
            <person name="Uchiyama S."/>
            <person name="Vandenbol M."/>
            <person name="Vannier F."/>
            <person name="Vassarotti A."/>
            <person name="Viari A."/>
            <person name="Wambutt R."/>
            <person name="Wedler E."/>
            <person name="Wedler H."/>
            <person name="Weitzenegger T."/>
            <person name="Winters P."/>
            <person name="Wipat A."/>
            <person name="Yamamoto H."/>
            <person name="Yamane K."/>
            <person name="Yasumoto K."/>
            <person name="Yata K."/>
            <person name="Yoshida K."/>
            <person name="Yoshikawa H.-F."/>
            <person name="Zumstein E."/>
            <person name="Yoshikawa H."/>
            <person name="Danchin A."/>
        </authorList>
    </citation>
    <scope>NUCLEOTIDE SEQUENCE [LARGE SCALE GENOMIC DNA]</scope>
    <source>
        <strain>168</strain>
    </source>
</reference>
<reference key="3">
    <citation type="journal article" date="2009" name="Microbiology">
        <title>From a consortium sequence to a unified sequence: the Bacillus subtilis 168 reference genome a decade later.</title>
        <authorList>
            <person name="Barbe V."/>
            <person name="Cruveiller S."/>
            <person name="Kunst F."/>
            <person name="Lenoble P."/>
            <person name="Meurice G."/>
            <person name="Sekowska A."/>
            <person name="Vallenet D."/>
            <person name="Wang T."/>
            <person name="Moszer I."/>
            <person name="Medigue C."/>
            <person name="Danchin A."/>
        </authorList>
    </citation>
    <scope>SEQUENCE REVISION TO 524</scope>
</reference>
<reference key="4">
    <citation type="journal article" date="1995" name="J. Bacteriol.">
        <title>Cloning, nucleotide sequence, and regulation of katE encoding a sigma B-dependent catalase in Bacillus subtilis.</title>
        <authorList>
            <person name="Engelmann S."/>
            <person name="Lindner C."/>
            <person name="Hecker M."/>
        </authorList>
    </citation>
    <scope>NUCLEOTIDE SEQUENCE [GENOMIC DNA] OF 1-536</scope>
</reference>
<sequence length="686" mass="77480">MSDDQNKRVNEHSKDEQLEQYRTDNSGKKMTTNQGLRVSEDEHSLKAGVRGPTLMEDFHFREKMTHFDHERIPERVVHARGFGVHGFFQVYEPMTEYTRAKFLQDPSVKTPVFVRFSTVAGSKGSADTVRDARGFATKFYTEEGNYDLVGNNIPVFFIQDAIKFPDLVHAFKPEPHNEMPQAATAHDTFWDFVANNPESAHMVMWTMSDRGIPRSYRMMEGFGVHTFRFVNEQGKARFVKFHWKPVLGVHSLVWDEAQKIAGKDPDFHRRDLWETIENGGKVEYELGVQMIDEEDEFKFDFDILDPTKLWPEELVPVKIIGKMTLNRNQDNVFAETEQVAFHPGNVVPGIDFTNDPLLQGRLFSYTDTQLIRLGGPNFHEIPINRPVCPFHNNQYDGYHRMTINKGPVAYHKNSLQNNDPSPATAEEGGYVHYQEKVEGKKIRQRSDSFNDYYSQAKLFWNSMSPVEKQHIISAFCFEVGKVKSKDVQRQVVDVFSNVDADLAEEIAKGVGVAAPAKRKASKEILTSPALSQARTVKTASTRKVAVLAGNGFHEKELQTVLEALKQEGITVDIISQNLGYMTSGSGQQLEASGTFLTVDSVLYDAVYAAGGLELKDNKQAMAFIREAYNHYKAIGAANEGIDLLQSSVGTTEGLGIVTAKDEPDYTAFSKAFIDAVAAHRHWDRRI</sequence>
<dbReference type="EC" id="1.11.1.6"/>
<dbReference type="EMBL" id="D83026">
    <property type="protein sequence ID" value="BAA11699.1"/>
    <property type="molecule type" value="Genomic_DNA"/>
</dbReference>
<dbReference type="EMBL" id="AL009126">
    <property type="protein sequence ID" value="CAB15931.2"/>
    <property type="molecule type" value="Genomic_DNA"/>
</dbReference>
<dbReference type="EMBL" id="X85182">
    <property type="protein sequence ID" value="CAA59465.1"/>
    <property type="status" value="ALT_FRAME"/>
    <property type="molecule type" value="Genomic_DNA"/>
</dbReference>
<dbReference type="PIR" id="D69647">
    <property type="entry name" value="D69647"/>
</dbReference>
<dbReference type="RefSeq" id="NP_391784.2">
    <property type="nucleotide sequence ID" value="NC_000964.3"/>
</dbReference>
<dbReference type="RefSeq" id="WP_003243331.1">
    <property type="nucleotide sequence ID" value="NZ_OZ025638.1"/>
</dbReference>
<dbReference type="SMR" id="P42234"/>
<dbReference type="FunCoup" id="P42234">
    <property type="interactions" value="212"/>
</dbReference>
<dbReference type="STRING" id="224308.BSU39050"/>
<dbReference type="PeroxiBase" id="4059">
    <property type="entry name" value="BsKat02_168"/>
</dbReference>
<dbReference type="PaxDb" id="224308-BSU39050"/>
<dbReference type="EnsemblBacteria" id="CAB15931">
    <property type="protein sequence ID" value="CAB15931"/>
    <property type="gene ID" value="BSU_39050"/>
</dbReference>
<dbReference type="GeneID" id="937481"/>
<dbReference type="KEGG" id="bsu:BSU39050"/>
<dbReference type="PATRIC" id="fig|224308.179.peg.4228"/>
<dbReference type="eggNOG" id="COG0693">
    <property type="taxonomic scope" value="Bacteria"/>
</dbReference>
<dbReference type="eggNOG" id="COG0753">
    <property type="taxonomic scope" value="Bacteria"/>
</dbReference>
<dbReference type="InParanoid" id="P42234"/>
<dbReference type="OrthoDB" id="9760293at2"/>
<dbReference type="PhylomeDB" id="P42234"/>
<dbReference type="BioCyc" id="BSUB:BSU39050-MONOMER"/>
<dbReference type="Proteomes" id="UP000001570">
    <property type="component" value="Chromosome"/>
</dbReference>
<dbReference type="GO" id="GO:0005829">
    <property type="term" value="C:cytosol"/>
    <property type="evidence" value="ECO:0000318"/>
    <property type="project" value="GO_Central"/>
</dbReference>
<dbReference type="GO" id="GO:0004096">
    <property type="term" value="F:catalase activity"/>
    <property type="evidence" value="ECO:0000318"/>
    <property type="project" value="GO_Central"/>
</dbReference>
<dbReference type="GO" id="GO:0020037">
    <property type="term" value="F:heme binding"/>
    <property type="evidence" value="ECO:0000318"/>
    <property type="project" value="GO_Central"/>
</dbReference>
<dbReference type="GO" id="GO:0046872">
    <property type="term" value="F:metal ion binding"/>
    <property type="evidence" value="ECO:0007669"/>
    <property type="project" value="UniProtKB-KW"/>
</dbReference>
<dbReference type="GO" id="GO:0042744">
    <property type="term" value="P:hydrogen peroxide catabolic process"/>
    <property type="evidence" value="ECO:0000318"/>
    <property type="project" value="GO_Central"/>
</dbReference>
<dbReference type="GO" id="GO:0006979">
    <property type="term" value="P:response to oxidative stress"/>
    <property type="evidence" value="ECO:0000318"/>
    <property type="project" value="GO_Central"/>
</dbReference>
<dbReference type="GO" id="GO:0030435">
    <property type="term" value="P:sporulation resulting in formation of a cellular spore"/>
    <property type="evidence" value="ECO:0007669"/>
    <property type="project" value="UniProtKB-KW"/>
</dbReference>
<dbReference type="CDD" id="cd08155">
    <property type="entry name" value="catalase_clade_2"/>
    <property type="match status" value="1"/>
</dbReference>
<dbReference type="CDD" id="cd03132">
    <property type="entry name" value="GATase1_catalase"/>
    <property type="match status" value="1"/>
</dbReference>
<dbReference type="FunFam" id="2.40.180.10:FF:000003">
    <property type="entry name" value="Catalase"/>
    <property type="match status" value="1"/>
</dbReference>
<dbReference type="FunFam" id="1.20.1370.20:FF:000001">
    <property type="entry name" value="Catalase HPII"/>
    <property type="match status" value="1"/>
</dbReference>
<dbReference type="Gene3D" id="1.20.1370.20">
    <property type="match status" value="1"/>
</dbReference>
<dbReference type="Gene3D" id="3.40.50.880">
    <property type="match status" value="1"/>
</dbReference>
<dbReference type="Gene3D" id="2.40.180.10">
    <property type="entry name" value="Catalase core domain"/>
    <property type="match status" value="1"/>
</dbReference>
<dbReference type="InterPro" id="IPR018028">
    <property type="entry name" value="Catalase"/>
</dbReference>
<dbReference type="InterPro" id="IPR024708">
    <property type="entry name" value="Catalase_AS"/>
</dbReference>
<dbReference type="InterPro" id="IPR024712">
    <property type="entry name" value="Catalase_clade2"/>
</dbReference>
<dbReference type="InterPro" id="IPR043156">
    <property type="entry name" value="Catalase_clade2_helical"/>
</dbReference>
<dbReference type="InterPro" id="IPR011614">
    <property type="entry name" value="Catalase_core"/>
</dbReference>
<dbReference type="InterPro" id="IPR002226">
    <property type="entry name" value="Catalase_haem_BS"/>
</dbReference>
<dbReference type="InterPro" id="IPR010582">
    <property type="entry name" value="Catalase_immune_responsive"/>
</dbReference>
<dbReference type="InterPro" id="IPR041399">
    <property type="entry name" value="Catalase_large_C"/>
</dbReference>
<dbReference type="InterPro" id="IPR020835">
    <property type="entry name" value="Catalase_sf"/>
</dbReference>
<dbReference type="InterPro" id="IPR029062">
    <property type="entry name" value="Class_I_gatase-like"/>
</dbReference>
<dbReference type="PANTHER" id="PTHR42821">
    <property type="entry name" value="CATALASE"/>
    <property type="match status" value="1"/>
</dbReference>
<dbReference type="PANTHER" id="PTHR42821:SF1">
    <property type="entry name" value="CATALASE-B"/>
    <property type="match status" value="1"/>
</dbReference>
<dbReference type="Pfam" id="PF00199">
    <property type="entry name" value="Catalase"/>
    <property type="match status" value="1"/>
</dbReference>
<dbReference type="Pfam" id="PF06628">
    <property type="entry name" value="Catalase-rel"/>
    <property type="match status" value="1"/>
</dbReference>
<dbReference type="Pfam" id="PF18011">
    <property type="entry name" value="Catalase_C"/>
    <property type="match status" value="1"/>
</dbReference>
<dbReference type="PIRSF" id="PIRSF038927">
    <property type="entry name" value="Catalase_clade2"/>
    <property type="match status" value="1"/>
</dbReference>
<dbReference type="PRINTS" id="PR00067">
    <property type="entry name" value="CATALASE"/>
</dbReference>
<dbReference type="SMART" id="SM01060">
    <property type="entry name" value="Catalase"/>
    <property type="match status" value="1"/>
</dbReference>
<dbReference type="SUPFAM" id="SSF52317">
    <property type="entry name" value="Class I glutamine amidotransferase-like"/>
    <property type="match status" value="1"/>
</dbReference>
<dbReference type="SUPFAM" id="SSF56634">
    <property type="entry name" value="Heme-dependent catalase-like"/>
    <property type="match status" value="1"/>
</dbReference>
<dbReference type="PROSITE" id="PS00437">
    <property type="entry name" value="CATALASE_1"/>
    <property type="match status" value="1"/>
</dbReference>
<dbReference type="PROSITE" id="PS00438">
    <property type="entry name" value="CATALASE_2"/>
    <property type="match status" value="1"/>
</dbReference>
<dbReference type="PROSITE" id="PS51402">
    <property type="entry name" value="CATALASE_3"/>
    <property type="match status" value="1"/>
</dbReference>
<organism>
    <name type="scientific">Bacillus subtilis (strain 168)</name>
    <dbReference type="NCBI Taxonomy" id="224308"/>
    <lineage>
        <taxon>Bacteria</taxon>
        <taxon>Bacillati</taxon>
        <taxon>Bacillota</taxon>
        <taxon>Bacilli</taxon>
        <taxon>Bacillales</taxon>
        <taxon>Bacillaceae</taxon>
        <taxon>Bacillus</taxon>
    </lineage>
</organism>
<gene>
    <name type="primary">katE</name>
    <name type="synonym">katB</name>
    <name type="ordered locus">BSU39050</name>
    <name type="ORF">N15D</name>
</gene>
<keyword id="KW-0349">Heme</keyword>
<keyword id="KW-0376">Hydrogen peroxide</keyword>
<keyword id="KW-0408">Iron</keyword>
<keyword id="KW-0479">Metal-binding</keyword>
<keyword id="KW-0560">Oxidoreductase</keyword>
<keyword id="KW-0575">Peroxidase</keyword>
<keyword id="KW-1185">Reference proteome</keyword>
<keyword id="KW-0749">Sporulation</keyword>
<accession>P42234</accession>
<accession>P42309</accession>
<name>CATE_BACSU</name>
<protein>
    <recommendedName>
        <fullName>Catalase-2</fullName>
        <ecNumber>1.11.1.6</ecNumber>
    </recommendedName>
</protein>
<feature type="chain" id="PRO_0000084970" description="Catalase-2">
    <location>
        <begin position="1"/>
        <end position="686"/>
    </location>
</feature>
<feature type="region of interest" description="Disordered" evidence="3">
    <location>
        <begin position="1"/>
        <end position="43"/>
    </location>
</feature>
<feature type="compositionally biased region" description="Basic and acidic residues" evidence="3">
    <location>
        <begin position="1"/>
        <end position="27"/>
    </location>
</feature>
<feature type="active site" evidence="2">
    <location>
        <position position="78"/>
    </location>
</feature>
<feature type="active site" evidence="2">
    <location>
        <position position="151"/>
    </location>
</feature>
<feature type="binding site" description="axial binding residue" evidence="1">
    <location>
        <position position="365"/>
    </location>
    <ligand>
        <name>heme</name>
        <dbReference type="ChEBI" id="CHEBI:30413"/>
    </ligand>
    <ligandPart>
        <name>Fe</name>
        <dbReference type="ChEBI" id="CHEBI:18248"/>
    </ligandPart>
</feature>
<feature type="sequence conflict" description="In Ref. 1; BAA11699." evidence="4" ref="1">
    <original>I</original>
    <variation>N</variation>
    <location>
        <position position="524"/>
    </location>
</feature>
<comment type="function">
    <text>Decomposes hydrogen peroxide into water and oxygen; serves to protect cells from the toxic effects of hydrogen peroxide. Involved in sporulation.</text>
</comment>
<comment type="catalytic activity">
    <reaction evidence="2">
        <text>2 H2O2 = O2 + 2 H2O</text>
        <dbReference type="Rhea" id="RHEA:20309"/>
        <dbReference type="ChEBI" id="CHEBI:15377"/>
        <dbReference type="ChEBI" id="CHEBI:15379"/>
        <dbReference type="ChEBI" id="CHEBI:16240"/>
        <dbReference type="EC" id="1.11.1.6"/>
    </reaction>
</comment>
<comment type="cofactor">
    <cofactor>
        <name>heme</name>
        <dbReference type="ChEBI" id="CHEBI:30413"/>
    </cofactor>
</comment>
<comment type="similarity">
    <text evidence="4">Belongs to the catalase family. HPII subfamily.</text>
</comment>
<comment type="sequence caution" evidence="4">
    <conflict type="frameshift">
        <sequence resource="EMBL-CDS" id="CAA59465"/>
    </conflict>
</comment>